<sequence>MKPMTSDVMPAAERKVRVDLAERSYDILIGPGLIAAAGGEIASRLKGRKMAVITDENVAPRYLEPLMASLAGSGMDPVSLILPAGEKTKSFEHLIPVCEAVLGARIERNDAVIALGGGVIGDLTGFAAGIVRRGSRFIQIPTSLLAQVDSSVGGKTGINSPHGKNLIGVFHQPDLVLADTAALDTLSPREFRAGYAEVVKYGLIDKPDFFEWLEQNWQAVFAGGPARIEAIAVSCQAKADVVAADERENGLRALLNLGHTFGHALEAATGYDSKRLVHGEGVAIGMVLAHEFSARMNIASPDDARRVEMHLKTVGLPTRMADIPGMLPPADRLLEAIAQDKKVKGGKFTFILTRGIGQSFIADDVPSSEVLSFLEERIPR</sequence>
<accession>A6UCL4</accession>
<keyword id="KW-0028">Amino-acid biosynthesis</keyword>
<keyword id="KW-0057">Aromatic amino acid biosynthesis</keyword>
<keyword id="KW-0170">Cobalt</keyword>
<keyword id="KW-0963">Cytoplasm</keyword>
<keyword id="KW-0456">Lyase</keyword>
<keyword id="KW-0479">Metal-binding</keyword>
<keyword id="KW-0520">NAD</keyword>
<keyword id="KW-0547">Nucleotide-binding</keyword>
<keyword id="KW-0862">Zinc</keyword>
<gene>
    <name evidence="1" type="primary">aroB</name>
    <name type="ordered locus">Smed_2564</name>
</gene>
<proteinExistence type="inferred from homology"/>
<reference key="1">
    <citation type="submission" date="2007-06" db="EMBL/GenBank/DDBJ databases">
        <title>Complete sequence of Sinorhizobium medicae WSM419 chromosome.</title>
        <authorList>
            <consortium name="US DOE Joint Genome Institute"/>
            <person name="Copeland A."/>
            <person name="Lucas S."/>
            <person name="Lapidus A."/>
            <person name="Barry K."/>
            <person name="Glavina del Rio T."/>
            <person name="Dalin E."/>
            <person name="Tice H."/>
            <person name="Pitluck S."/>
            <person name="Chain P."/>
            <person name="Malfatti S."/>
            <person name="Shin M."/>
            <person name="Vergez L."/>
            <person name="Schmutz J."/>
            <person name="Larimer F."/>
            <person name="Land M."/>
            <person name="Hauser L."/>
            <person name="Kyrpides N."/>
            <person name="Mikhailova N."/>
            <person name="Reeve W.G."/>
            <person name="Richardson P."/>
        </authorList>
    </citation>
    <scope>NUCLEOTIDE SEQUENCE [LARGE SCALE GENOMIC DNA]</scope>
    <source>
        <strain>WSM419</strain>
    </source>
</reference>
<comment type="function">
    <text evidence="1">Catalyzes the conversion of 3-deoxy-D-arabino-heptulosonate 7-phosphate (DAHP) to dehydroquinate (DHQ).</text>
</comment>
<comment type="catalytic activity">
    <reaction evidence="1">
        <text>7-phospho-2-dehydro-3-deoxy-D-arabino-heptonate = 3-dehydroquinate + phosphate</text>
        <dbReference type="Rhea" id="RHEA:21968"/>
        <dbReference type="ChEBI" id="CHEBI:32364"/>
        <dbReference type="ChEBI" id="CHEBI:43474"/>
        <dbReference type="ChEBI" id="CHEBI:58394"/>
        <dbReference type="EC" id="4.2.3.4"/>
    </reaction>
</comment>
<comment type="cofactor">
    <cofactor evidence="1">
        <name>Co(2+)</name>
        <dbReference type="ChEBI" id="CHEBI:48828"/>
    </cofactor>
    <cofactor evidence="1">
        <name>Zn(2+)</name>
        <dbReference type="ChEBI" id="CHEBI:29105"/>
    </cofactor>
    <text evidence="1">Binds 1 divalent metal cation per subunit. Can use either Co(2+) or Zn(2+).</text>
</comment>
<comment type="cofactor">
    <cofactor evidence="1">
        <name>NAD(+)</name>
        <dbReference type="ChEBI" id="CHEBI:57540"/>
    </cofactor>
</comment>
<comment type="pathway">
    <text evidence="1">Metabolic intermediate biosynthesis; chorismate biosynthesis; chorismate from D-erythrose 4-phosphate and phosphoenolpyruvate: step 2/7.</text>
</comment>
<comment type="subcellular location">
    <subcellularLocation>
        <location evidence="1">Cytoplasm</location>
    </subcellularLocation>
</comment>
<comment type="similarity">
    <text evidence="1">Belongs to the sugar phosphate cyclases superfamily. Dehydroquinate synthase family.</text>
</comment>
<protein>
    <recommendedName>
        <fullName evidence="1">3-dehydroquinate synthase</fullName>
        <shortName evidence="1">DHQS</shortName>
        <ecNumber evidence="1">4.2.3.4</ecNumber>
    </recommendedName>
</protein>
<feature type="chain" id="PRO_1000117499" description="3-dehydroquinate synthase">
    <location>
        <begin position="1"/>
        <end position="380"/>
    </location>
</feature>
<feature type="binding site" evidence="1">
    <location>
        <begin position="118"/>
        <end position="122"/>
    </location>
    <ligand>
        <name>NAD(+)</name>
        <dbReference type="ChEBI" id="CHEBI:57540"/>
    </ligand>
</feature>
<feature type="binding site" evidence="1">
    <location>
        <begin position="142"/>
        <end position="143"/>
    </location>
    <ligand>
        <name>NAD(+)</name>
        <dbReference type="ChEBI" id="CHEBI:57540"/>
    </ligand>
</feature>
<feature type="binding site" evidence="1">
    <location>
        <position position="155"/>
    </location>
    <ligand>
        <name>NAD(+)</name>
        <dbReference type="ChEBI" id="CHEBI:57540"/>
    </ligand>
</feature>
<feature type="binding site" evidence="1">
    <location>
        <position position="164"/>
    </location>
    <ligand>
        <name>NAD(+)</name>
        <dbReference type="ChEBI" id="CHEBI:57540"/>
    </ligand>
</feature>
<feature type="binding site" evidence="1">
    <location>
        <position position="197"/>
    </location>
    <ligand>
        <name>Zn(2+)</name>
        <dbReference type="ChEBI" id="CHEBI:29105"/>
    </ligand>
</feature>
<feature type="binding site" evidence="1">
    <location>
        <position position="259"/>
    </location>
    <ligand>
        <name>Zn(2+)</name>
        <dbReference type="ChEBI" id="CHEBI:29105"/>
    </ligand>
</feature>
<feature type="binding site" evidence="1">
    <location>
        <position position="278"/>
    </location>
    <ligand>
        <name>Zn(2+)</name>
        <dbReference type="ChEBI" id="CHEBI:29105"/>
    </ligand>
</feature>
<evidence type="ECO:0000255" key="1">
    <source>
        <dbReference type="HAMAP-Rule" id="MF_00110"/>
    </source>
</evidence>
<dbReference type="EC" id="4.2.3.4" evidence="1"/>
<dbReference type="EMBL" id="CP000738">
    <property type="protein sequence ID" value="ABR61394.1"/>
    <property type="molecule type" value="Genomic_DNA"/>
</dbReference>
<dbReference type="RefSeq" id="YP_001328229.1">
    <property type="nucleotide sequence ID" value="NC_009636.1"/>
</dbReference>
<dbReference type="SMR" id="A6UCL4"/>
<dbReference type="STRING" id="366394.Smed_2564"/>
<dbReference type="KEGG" id="smd:Smed_2564"/>
<dbReference type="PATRIC" id="fig|366394.8.peg.5756"/>
<dbReference type="eggNOG" id="COG0337">
    <property type="taxonomic scope" value="Bacteria"/>
</dbReference>
<dbReference type="HOGENOM" id="CLU_001201_0_2_5"/>
<dbReference type="OrthoDB" id="9806583at2"/>
<dbReference type="UniPathway" id="UPA00053">
    <property type="reaction ID" value="UER00085"/>
</dbReference>
<dbReference type="Proteomes" id="UP000001108">
    <property type="component" value="Chromosome"/>
</dbReference>
<dbReference type="GO" id="GO:0005737">
    <property type="term" value="C:cytoplasm"/>
    <property type="evidence" value="ECO:0007669"/>
    <property type="project" value="UniProtKB-SubCell"/>
</dbReference>
<dbReference type="GO" id="GO:0003856">
    <property type="term" value="F:3-dehydroquinate synthase activity"/>
    <property type="evidence" value="ECO:0007669"/>
    <property type="project" value="UniProtKB-UniRule"/>
</dbReference>
<dbReference type="GO" id="GO:0046872">
    <property type="term" value="F:metal ion binding"/>
    <property type="evidence" value="ECO:0007669"/>
    <property type="project" value="UniProtKB-KW"/>
</dbReference>
<dbReference type="GO" id="GO:0000166">
    <property type="term" value="F:nucleotide binding"/>
    <property type="evidence" value="ECO:0007669"/>
    <property type="project" value="UniProtKB-KW"/>
</dbReference>
<dbReference type="GO" id="GO:0008652">
    <property type="term" value="P:amino acid biosynthetic process"/>
    <property type="evidence" value="ECO:0007669"/>
    <property type="project" value="UniProtKB-KW"/>
</dbReference>
<dbReference type="GO" id="GO:0009073">
    <property type="term" value="P:aromatic amino acid family biosynthetic process"/>
    <property type="evidence" value="ECO:0007669"/>
    <property type="project" value="UniProtKB-KW"/>
</dbReference>
<dbReference type="GO" id="GO:0009423">
    <property type="term" value="P:chorismate biosynthetic process"/>
    <property type="evidence" value="ECO:0007669"/>
    <property type="project" value="UniProtKB-UniRule"/>
</dbReference>
<dbReference type="CDD" id="cd08195">
    <property type="entry name" value="DHQS"/>
    <property type="match status" value="1"/>
</dbReference>
<dbReference type="FunFam" id="3.40.50.1970:FF:000007">
    <property type="entry name" value="Pentafunctional AROM polypeptide"/>
    <property type="match status" value="1"/>
</dbReference>
<dbReference type="Gene3D" id="3.40.50.1970">
    <property type="match status" value="1"/>
</dbReference>
<dbReference type="Gene3D" id="1.20.1090.10">
    <property type="entry name" value="Dehydroquinate synthase-like - alpha domain"/>
    <property type="match status" value="1"/>
</dbReference>
<dbReference type="HAMAP" id="MF_00110">
    <property type="entry name" value="DHQ_synthase"/>
    <property type="match status" value="1"/>
</dbReference>
<dbReference type="InterPro" id="IPR050071">
    <property type="entry name" value="Dehydroquinate_synthase"/>
</dbReference>
<dbReference type="InterPro" id="IPR016037">
    <property type="entry name" value="DHQ_synth_AroB"/>
</dbReference>
<dbReference type="InterPro" id="IPR030963">
    <property type="entry name" value="DHQ_synth_fam"/>
</dbReference>
<dbReference type="InterPro" id="IPR030960">
    <property type="entry name" value="DHQS/DOIS_N"/>
</dbReference>
<dbReference type="InterPro" id="IPR056179">
    <property type="entry name" value="DHQS_C"/>
</dbReference>
<dbReference type="NCBIfam" id="TIGR01357">
    <property type="entry name" value="aroB"/>
    <property type="match status" value="1"/>
</dbReference>
<dbReference type="PANTHER" id="PTHR43622">
    <property type="entry name" value="3-DEHYDROQUINATE SYNTHASE"/>
    <property type="match status" value="1"/>
</dbReference>
<dbReference type="PANTHER" id="PTHR43622:SF7">
    <property type="entry name" value="3-DEHYDROQUINATE SYNTHASE, CHLOROPLASTIC"/>
    <property type="match status" value="1"/>
</dbReference>
<dbReference type="Pfam" id="PF01761">
    <property type="entry name" value="DHQ_synthase"/>
    <property type="match status" value="1"/>
</dbReference>
<dbReference type="Pfam" id="PF24621">
    <property type="entry name" value="DHQS_C"/>
    <property type="match status" value="1"/>
</dbReference>
<dbReference type="PIRSF" id="PIRSF001455">
    <property type="entry name" value="DHQ_synth"/>
    <property type="match status" value="1"/>
</dbReference>
<dbReference type="SUPFAM" id="SSF56796">
    <property type="entry name" value="Dehydroquinate synthase-like"/>
    <property type="match status" value="1"/>
</dbReference>
<organism>
    <name type="scientific">Sinorhizobium medicae (strain WSM419)</name>
    <name type="common">Ensifer medicae</name>
    <dbReference type="NCBI Taxonomy" id="366394"/>
    <lineage>
        <taxon>Bacteria</taxon>
        <taxon>Pseudomonadati</taxon>
        <taxon>Pseudomonadota</taxon>
        <taxon>Alphaproteobacteria</taxon>
        <taxon>Hyphomicrobiales</taxon>
        <taxon>Rhizobiaceae</taxon>
        <taxon>Sinorhizobium/Ensifer group</taxon>
        <taxon>Sinorhizobium</taxon>
    </lineage>
</organism>
<name>AROB_SINMW</name>